<protein>
    <recommendedName>
        <fullName evidence="1">HTH-type transcriptional regulator MalT</fullName>
    </recommendedName>
    <alternativeName>
        <fullName evidence="1">ATP-dependent transcriptional activator MalT</fullName>
    </alternativeName>
</protein>
<keyword id="KW-0010">Activator</keyword>
<keyword id="KW-0067">ATP-binding</keyword>
<keyword id="KW-0119">Carbohydrate metabolism</keyword>
<keyword id="KW-0238">DNA-binding</keyword>
<keyword id="KW-0547">Nucleotide-binding</keyword>
<keyword id="KW-1185">Reference proteome</keyword>
<keyword id="KW-0804">Transcription</keyword>
<keyword id="KW-0805">Transcription regulation</keyword>
<gene>
    <name evidence="1" type="primary">malT</name>
    <name type="ordered locus">c4196</name>
</gene>
<dbReference type="EMBL" id="AE014075">
    <property type="protein sequence ID" value="AAN82634.1"/>
    <property type="molecule type" value="Genomic_DNA"/>
</dbReference>
<dbReference type="RefSeq" id="WP_000906976.1">
    <property type="nucleotide sequence ID" value="NZ_CP051263.1"/>
</dbReference>
<dbReference type="SMR" id="Q8CXX5"/>
<dbReference type="STRING" id="199310.c4196"/>
<dbReference type="DNASU" id="1036838"/>
<dbReference type="KEGG" id="ecc:c4196"/>
<dbReference type="eggNOG" id="COG2909">
    <property type="taxonomic scope" value="Bacteria"/>
</dbReference>
<dbReference type="HOGENOM" id="CLU_006325_3_0_6"/>
<dbReference type="BioCyc" id="ECOL199310:C4196-MONOMER"/>
<dbReference type="Proteomes" id="UP000001410">
    <property type="component" value="Chromosome"/>
</dbReference>
<dbReference type="GO" id="GO:0005524">
    <property type="term" value="F:ATP binding"/>
    <property type="evidence" value="ECO:0007669"/>
    <property type="project" value="UniProtKB-UniRule"/>
</dbReference>
<dbReference type="GO" id="GO:0003677">
    <property type="term" value="F:DNA binding"/>
    <property type="evidence" value="ECO:0007669"/>
    <property type="project" value="UniProtKB-KW"/>
</dbReference>
<dbReference type="GO" id="GO:0003700">
    <property type="term" value="F:DNA-binding transcription factor activity"/>
    <property type="evidence" value="ECO:0007669"/>
    <property type="project" value="UniProtKB-UniRule"/>
</dbReference>
<dbReference type="GO" id="GO:0045913">
    <property type="term" value="P:positive regulation of carbohydrate metabolic process"/>
    <property type="evidence" value="ECO:0007669"/>
    <property type="project" value="UniProtKB-UniRule"/>
</dbReference>
<dbReference type="GO" id="GO:0045893">
    <property type="term" value="P:positive regulation of DNA-templated transcription"/>
    <property type="evidence" value="ECO:0007669"/>
    <property type="project" value="UniProtKB-UniRule"/>
</dbReference>
<dbReference type="CDD" id="cd06170">
    <property type="entry name" value="LuxR_C_like"/>
    <property type="match status" value="1"/>
</dbReference>
<dbReference type="FunFam" id="1.10.10.10:FF:000115">
    <property type="entry name" value="HTH-type transcriptional regulator MalT"/>
    <property type="match status" value="1"/>
</dbReference>
<dbReference type="FunFam" id="1.25.40.10:FF:000086">
    <property type="entry name" value="HTH-type transcriptional regulator MalT"/>
    <property type="match status" value="1"/>
</dbReference>
<dbReference type="Gene3D" id="3.40.50.300">
    <property type="entry name" value="P-loop containing nucleotide triphosphate hydrolases"/>
    <property type="match status" value="1"/>
</dbReference>
<dbReference type="Gene3D" id="1.25.40.10">
    <property type="entry name" value="Tetratricopeptide repeat domain"/>
    <property type="match status" value="1"/>
</dbReference>
<dbReference type="Gene3D" id="1.10.10.10">
    <property type="entry name" value="Winged helix-like DNA-binding domain superfamily/Winged helix DNA-binding domain"/>
    <property type="match status" value="1"/>
</dbReference>
<dbReference type="HAMAP" id="MF_01247">
    <property type="entry name" value="HTH_type_MalT"/>
    <property type="match status" value="1"/>
</dbReference>
<dbReference type="InterPro" id="IPR027417">
    <property type="entry name" value="P-loop_NTPase"/>
</dbReference>
<dbReference type="InterPro" id="IPR016032">
    <property type="entry name" value="Sig_transdc_resp-reg_C-effctor"/>
</dbReference>
<dbReference type="InterPro" id="IPR011990">
    <property type="entry name" value="TPR-like_helical_dom_sf"/>
</dbReference>
<dbReference type="InterPro" id="IPR041617">
    <property type="entry name" value="TPR_MalT"/>
</dbReference>
<dbReference type="InterPro" id="IPR023768">
    <property type="entry name" value="Tscrpt_reg_HTH_MalT"/>
</dbReference>
<dbReference type="InterPro" id="IPR000792">
    <property type="entry name" value="Tscrpt_reg_LuxR_C"/>
</dbReference>
<dbReference type="InterPro" id="IPR036388">
    <property type="entry name" value="WH-like_DNA-bd_sf"/>
</dbReference>
<dbReference type="NCBIfam" id="NF003420">
    <property type="entry name" value="PRK04841.1"/>
    <property type="match status" value="1"/>
</dbReference>
<dbReference type="PANTHER" id="PTHR44688">
    <property type="entry name" value="DNA-BINDING TRANSCRIPTIONAL ACTIVATOR DEVR_DOSR"/>
    <property type="match status" value="1"/>
</dbReference>
<dbReference type="PANTHER" id="PTHR44688:SF16">
    <property type="entry name" value="DNA-BINDING TRANSCRIPTIONAL ACTIVATOR DEVR_DOSR"/>
    <property type="match status" value="1"/>
</dbReference>
<dbReference type="Pfam" id="PF00196">
    <property type="entry name" value="GerE"/>
    <property type="match status" value="1"/>
</dbReference>
<dbReference type="Pfam" id="PF17874">
    <property type="entry name" value="TPR_MalT"/>
    <property type="match status" value="1"/>
</dbReference>
<dbReference type="PRINTS" id="PR00038">
    <property type="entry name" value="HTHLUXR"/>
</dbReference>
<dbReference type="SMART" id="SM00421">
    <property type="entry name" value="HTH_LUXR"/>
    <property type="match status" value="1"/>
</dbReference>
<dbReference type="SUPFAM" id="SSF46894">
    <property type="entry name" value="C-terminal effector domain of the bipartite response regulators"/>
    <property type="match status" value="1"/>
</dbReference>
<dbReference type="SUPFAM" id="SSF52540">
    <property type="entry name" value="P-loop containing nucleoside triphosphate hydrolases"/>
    <property type="match status" value="1"/>
</dbReference>
<dbReference type="SUPFAM" id="SSF48452">
    <property type="entry name" value="TPR-like"/>
    <property type="match status" value="1"/>
</dbReference>
<dbReference type="PROSITE" id="PS00622">
    <property type="entry name" value="HTH_LUXR_1"/>
    <property type="match status" value="1"/>
</dbReference>
<dbReference type="PROSITE" id="PS50043">
    <property type="entry name" value="HTH_LUXR_2"/>
    <property type="match status" value="1"/>
</dbReference>
<accession>Q8CXX5</accession>
<comment type="function">
    <text evidence="1">Positively regulates the transcription of the maltose regulon whose gene products are responsible for uptake and catabolism of malto-oligosaccharides. Specifically binds to the promoter region of its target genes, recognizing a short DNA motif called the MalT box.</text>
</comment>
<comment type="activity regulation">
    <text evidence="1">Activated by ATP and maltotriose, which are both required for DNA binding.</text>
</comment>
<comment type="subunit">
    <text evidence="1">Monomer in solution. Oligomerizes to an active state in the presence of the positive effectors ATP and maltotriose.</text>
</comment>
<comment type="similarity">
    <text evidence="1">Belongs to the MalT family.</text>
</comment>
<sequence length="901" mass="103024">MLIPSKLSRPVRLDHTVVRERLLAKLSGANNFRLALITSPAGYGKTTLISQWAAGKNDIGWYSLDEGDNQQERFASYLIAAVQQATNGHCAICETMAQKRQYASLTSLFAQLFIELAEWHSPLYLVIDDYHLITNPVIHESMRFFIRHQPENLTLVVLSRNLPQLGIANLRVRDQLLEIGSQQLAFTHQEAKQFFDCRLSSPIEAAESSRICDDVSGWATALQLIALSARQNTHSAHKSARRLAGINASHLSDYLVDEVLDNVDLATRHFLLKSAILRSMNDALITRVTGEENGQMRLEEIERQGLFLQRMDDTGEWFCYHPLFGNFLRQRCQWELAAELPEIHRAAAESWMAQGFPSEAIHHALAAGDALMLRDILLNHAWSLFNHSELSLLEESLKALPWDSLLENPQLVLLQAWLMQSQHRYGEVNTLLARAEHEIKDIREGTMHAEFNALRAQVAINDGNPDEAERLAKLALEELPPGWFYSRIVATSVLGEVLHCKGELTRSLALMQQTEQMARQHDVWHYALWSLIQQSEILFAQGFLQTAWETQEKAFQLINEQHLEQLPMHEFLVRIRAQLLWAWARLDEAEASARSGIEVLSSYQPQQQLQCLAMLIQCSLARGDLDNARSQLNRLENLLGNGKYHSDWISNANKVRVMYWQMTGDKAAAANWLRHTAKPEFANNHFLQGQWRNIARAQILLGEFESAEIVLEELNENARSLRLMSDLNRNLLLLNQLYWQAGRKSDAQRVLLDALKLANRTGFISHFVIEGEAMAQQLRQLIQLNTLPELEQHRAQRILREINQHHRHKFAHFDENFVERLLNHPEVPELIRTSPLTQREWQVLGLIYSGYSNEQIAGELEVAATTIKTHIRNLYQKLGVAHRQAAVQHAQKLLKMMGYGV</sequence>
<feature type="chain" id="PRO_0000184164" description="HTH-type transcriptional regulator MalT">
    <location>
        <begin position="1"/>
        <end position="901"/>
    </location>
</feature>
<feature type="domain" description="HTH luxR-type" evidence="1">
    <location>
        <begin position="829"/>
        <end position="894"/>
    </location>
</feature>
<feature type="DNA-binding region" description="H-T-H motif" evidence="1">
    <location>
        <begin position="853"/>
        <end position="872"/>
    </location>
</feature>
<feature type="binding site" evidence="1">
    <location>
        <begin position="39"/>
        <end position="46"/>
    </location>
    <ligand>
        <name>ATP</name>
        <dbReference type="ChEBI" id="CHEBI:30616"/>
    </ligand>
</feature>
<evidence type="ECO:0000255" key="1">
    <source>
        <dbReference type="HAMAP-Rule" id="MF_01247"/>
    </source>
</evidence>
<proteinExistence type="inferred from homology"/>
<organism>
    <name type="scientific">Escherichia coli O6:H1 (strain CFT073 / ATCC 700928 / UPEC)</name>
    <dbReference type="NCBI Taxonomy" id="199310"/>
    <lineage>
        <taxon>Bacteria</taxon>
        <taxon>Pseudomonadati</taxon>
        <taxon>Pseudomonadota</taxon>
        <taxon>Gammaproteobacteria</taxon>
        <taxon>Enterobacterales</taxon>
        <taxon>Enterobacteriaceae</taxon>
        <taxon>Escherichia</taxon>
    </lineage>
</organism>
<name>MALT_ECOL6</name>
<reference key="1">
    <citation type="journal article" date="2002" name="Proc. Natl. Acad. Sci. U.S.A.">
        <title>Extensive mosaic structure revealed by the complete genome sequence of uropathogenic Escherichia coli.</title>
        <authorList>
            <person name="Welch R.A."/>
            <person name="Burland V."/>
            <person name="Plunkett G. III"/>
            <person name="Redford P."/>
            <person name="Roesch P."/>
            <person name="Rasko D."/>
            <person name="Buckles E.L."/>
            <person name="Liou S.-R."/>
            <person name="Boutin A."/>
            <person name="Hackett J."/>
            <person name="Stroud D."/>
            <person name="Mayhew G.F."/>
            <person name="Rose D.J."/>
            <person name="Zhou S."/>
            <person name="Schwartz D.C."/>
            <person name="Perna N.T."/>
            <person name="Mobley H.L.T."/>
            <person name="Donnenberg M.S."/>
            <person name="Blattner F.R."/>
        </authorList>
    </citation>
    <scope>NUCLEOTIDE SEQUENCE [LARGE SCALE GENOMIC DNA]</scope>
    <source>
        <strain>CFT073 / ATCC 700928 / UPEC</strain>
    </source>
</reference>